<accession>Q87YC8</accession>
<name>MINC_PSESM</name>
<gene>
    <name evidence="1" type="primary">minC</name>
    <name type="ordered locus">PSPTO_3872</name>
</gene>
<organism>
    <name type="scientific">Pseudomonas syringae pv. tomato (strain ATCC BAA-871 / DC3000)</name>
    <dbReference type="NCBI Taxonomy" id="223283"/>
    <lineage>
        <taxon>Bacteria</taxon>
        <taxon>Pseudomonadati</taxon>
        <taxon>Pseudomonadota</taxon>
        <taxon>Gammaproteobacteria</taxon>
        <taxon>Pseudomonadales</taxon>
        <taxon>Pseudomonadaceae</taxon>
        <taxon>Pseudomonas</taxon>
    </lineage>
</organism>
<keyword id="KW-0131">Cell cycle</keyword>
<keyword id="KW-0132">Cell division</keyword>
<keyword id="KW-1185">Reference proteome</keyword>
<keyword id="KW-0717">Septation</keyword>
<feature type="chain" id="PRO_0000189056" description="Probable septum site-determining protein MinC">
    <location>
        <begin position="1"/>
        <end position="246"/>
    </location>
</feature>
<protein>
    <recommendedName>
        <fullName evidence="1">Probable septum site-determining protein MinC</fullName>
    </recommendedName>
</protein>
<dbReference type="EMBL" id="AE016853">
    <property type="protein sequence ID" value="AAO57339.1"/>
    <property type="molecule type" value="Genomic_DNA"/>
</dbReference>
<dbReference type="RefSeq" id="NP_793644.1">
    <property type="nucleotide sequence ID" value="NC_004578.1"/>
</dbReference>
<dbReference type="RefSeq" id="WP_011104763.1">
    <property type="nucleotide sequence ID" value="NC_004578.1"/>
</dbReference>
<dbReference type="SMR" id="Q87YC8"/>
<dbReference type="STRING" id="223283.PSPTO_3872"/>
<dbReference type="GeneID" id="1185543"/>
<dbReference type="KEGG" id="pst:PSPTO_3872"/>
<dbReference type="PATRIC" id="fig|223283.9.peg.3970"/>
<dbReference type="eggNOG" id="COG0850">
    <property type="taxonomic scope" value="Bacteria"/>
</dbReference>
<dbReference type="HOGENOM" id="CLU_067812_0_1_6"/>
<dbReference type="OrthoDB" id="9794530at2"/>
<dbReference type="PhylomeDB" id="Q87YC8"/>
<dbReference type="Proteomes" id="UP000002515">
    <property type="component" value="Chromosome"/>
</dbReference>
<dbReference type="GO" id="GO:0000902">
    <property type="term" value="P:cell morphogenesis"/>
    <property type="evidence" value="ECO:0007669"/>
    <property type="project" value="InterPro"/>
</dbReference>
<dbReference type="GO" id="GO:0000917">
    <property type="term" value="P:division septum assembly"/>
    <property type="evidence" value="ECO:0007669"/>
    <property type="project" value="UniProtKB-KW"/>
</dbReference>
<dbReference type="GO" id="GO:0051302">
    <property type="term" value="P:regulation of cell division"/>
    <property type="evidence" value="ECO:0007669"/>
    <property type="project" value="InterPro"/>
</dbReference>
<dbReference type="GO" id="GO:1901891">
    <property type="term" value="P:regulation of cell septum assembly"/>
    <property type="evidence" value="ECO:0007669"/>
    <property type="project" value="InterPro"/>
</dbReference>
<dbReference type="Gene3D" id="2.160.20.70">
    <property type="match status" value="1"/>
</dbReference>
<dbReference type="Gene3D" id="3.30.70.260">
    <property type="match status" value="1"/>
</dbReference>
<dbReference type="HAMAP" id="MF_00267">
    <property type="entry name" value="MinC"/>
    <property type="match status" value="1"/>
</dbReference>
<dbReference type="InterPro" id="IPR016098">
    <property type="entry name" value="CAP/MinC_C"/>
</dbReference>
<dbReference type="InterPro" id="IPR013033">
    <property type="entry name" value="MinC"/>
</dbReference>
<dbReference type="InterPro" id="IPR036145">
    <property type="entry name" value="MinC_C_sf"/>
</dbReference>
<dbReference type="InterPro" id="IPR007874">
    <property type="entry name" value="MinC_N"/>
</dbReference>
<dbReference type="InterPro" id="IPR005526">
    <property type="entry name" value="Septum_form_inhib_MinC_C"/>
</dbReference>
<dbReference type="NCBIfam" id="TIGR01222">
    <property type="entry name" value="minC"/>
    <property type="match status" value="1"/>
</dbReference>
<dbReference type="PANTHER" id="PTHR34108">
    <property type="entry name" value="SEPTUM SITE-DETERMINING PROTEIN MINC"/>
    <property type="match status" value="1"/>
</dbReference>
<dbReference type="PANTHER" id="PTHR34108:SF1">
    <property type="entry name" value="SEPTUM SITE-DETERMINING PROTEIN MINC"/>
    <property type="match status" value="1"/>
</dbReference>
<dbReference type="Pfam" id="PF03775">
    <property type="entry name" value="MinC_C"/>
    <property type="match status" value="1"/>
</dbReference>
<dbReference type="Pfam" id="PF05209">
    <property type="entry name" value="MinC_N"/>
    <property type="match status" value="1"/>
</dbReference>
<dbReference type="SUPFAM" id="SSF63848">
    <property type="entry name" value="Cell-division inhibitor MinC, C-terminal domain"/>
    <property type="match status" value="1"/>
</dbReference>
<sequence>MSQIESPNPEPVFQLKGSMLAITVMELARSNLEALDRQLAAKVAQAPNFFSNTPLILALDKLAPNEGPVDLPGLVRICRQHGLRTLAIRANRIEDIAAAIAVDLPVLPPSGARERVIDPIEAEAPKKLPEKPPEPLIKPTRVITSPVRGGQQIYAQGGDLVVVAPVSPGAELLADGNIHVYGPMRGRALAGIKGDTKARIFCQQLSAELISIAGQYKVSEDLRRDPLWGSPVQVSLSGDVLNIIRL</sequence>
<evidence type="ECO:0000255" key="1">
    <source>
        <dbReference type="HAMAP-Rule" id="MF_00267"/>
    </source>
</evidence>
<comment type="function">
    <text evidence="1">Cell division inhibitor that blocks the formation of polar Z ring septums. Rapidly oscillates between the poles of the cell to destabilize FtsZ filaments that have formed before they mature into polar Z rings. Prevents FtsZ polymerization.</text>
</comment>
<comment type="subunit">
    <text evidence="1">Interacts with MinD and FtsZ.</text>
</comment>
<comment type="similarity">
    <text evidence="1">Belongs to the MinC family.</text>
</comment>
<proteinExistence type="inferred from homology"/>
<reference key="1">
    <citation type="journal article" date="2003" name="Proc. Natl. Acad. Sci. U.S.A.">
        <title>The complete genome sequence of the Arabidopsis and tomato pathogen Pseudomonas syringae pv. tomato DC3000.</title>
        <authorList>
            <person name="Buell C.R."/>
            <person name="Joardar V."/>
            <person name="Lindeberg M."/>
            <person name="Selengut J."/>
            <person name="Paulsen I.T."/>
            <person name="Gwinn M.L."/>
            <person name="Dodson R.J."/>
            <person name="DeBoy R.T."/>
            <person name="Durkin A.S."/>
            <person name="Kolonay J.F."/>
            <person name="Madupu R."/>
            <person name="Daugherty S.C."/>
            <person name="Brinkac L.M."/>
            <person name="Beanan M.J."/>
            <person name="Haft D.H."/>
            <person name="Nelson W.C."/>
            <person name="Davidsen T.M."/>
            <person name="Zafar N."/>
            <person name="Zhou L."/>
            <person name="Liu J."/>
            <person name="Yuan Q."/>
            <person name="Khouri H.M."/>
            <person name="Fedorova N.B."/>
            <person name="Tran B."/>
            <person name="Russell D."/>
            <person name="Berry K.J."/>
            <person name="Utterback T.R."/>
            <person name="Van Aken S.E."/>
            <person name="Feldblyum T.V."/>
            <person name="D'Ascenzo M."/>
            <person name="Deng W.-L."/>
            <person name="Ramos A.R."/>
            <person name="Alfano J.R."/>
            <person name="Cartinhour S."/>
            <person name="Chatterjee A.K."/>
            <person name="Delaney T.P."/>
            <person name="Lazarowitz S.G."/>
            <person name="Martin G.B."/>
            <person name="Schneider D.J."/>
            <person name="Tang X."/>
            <person name="Bender C.L."/>
            <person name="White O."/>
            <person name="Fraser C.M."/>
            <person name="Collmer A."/>
        </authorList>
    </citation>
    <scope>NUCLEOTIDE SEQUENCE [LARGE SCALE GENOMIC DNA]</scope>
    <source>
        <strain>ATCC BAA-871 / DC3000</strain>
    </source>
</reference>